<sequence>MQFADWLHPSGWTIEILNAYGMGDRKRTNSMSKEAFTPEQLHLEKELGEMRLRPTVLHSQTDHQGFRPIPMMQ</sequence>
<dbReference type="EMBL" id="AL354701">
    <property type="status" value="NOT_ANNOTATED_CDS"/>
    <property type="molecule type" value="Genomic_DNA"/>
</dbReference>
<dbReference type="EMBL" id="AL442644">
    <property type="status" value="NOT_ANNOTATED_CDS"/>
    <property type="molecule type" value="Genomic_DNA"/>
</dbReference>
<dbReference type="EMBL" id="BC038565">
    <property type="status" value="NOT_ANNOTATED_CDS"/>
    <property type="molecule type" value="mRNA"/>
</dbReference>
<dbReference type="BioMuta" id="HGNC:31372"/>
<dbReference type="TopDownProteomics" id="B1AMM8"/>
<dbReference type="AGR" id="HGNC:31372"/>
<dbReference type="GeneCards" id="LINC00587"/>
<dbReference type="HGNC" id="HGNC:31372">
    <property type="gene designation" value="LINC00587"/>
</dbReference>
<dbReference type="neXtProt" id="NX_B1AMM8"/>
<dbReference type="InParanoid" id="B1AMM8"/>
<dbReference type="PAN-GO" id="B1AMM8">
    <property type="GO annotations" value="0 GO annotations based on evolutionary models"/>
</dbReference>
<dbReference type="PhylomeDB" id="B1AMM8"/>
<dbReference type="ChiTaRS" id="LINC00587">
    <property type="organism name" value="human"/>
</dbReference>
<dbReference type="Pharos" id="B1AMM8">
    <property type="development level" value="Tdark"/>
</dbReference>
<dbReference type="Proteomes" id="UP000005640">
    <property type="component" value="Unplaced"/>
</dbReference>
<dbReference type="RNAct" id="B1AMM8">
    <property type="molecule type" value="protein"/>
</dbReference>
<name>CI107_HUMAN</name>
<reference key="1">
    <citation type="journal article" date="2004" name="Nature">
        <title>DNA sequence and analysis of human chromosome 9.</title>
        <authorList>
            <person name="Humphray S.J."/>
            <person name="Oliver K."/>
            <person name="Hunt A.R."/>
            <person name="Plumb R.W."/>
            <person name="Loveland J.E."/>
            <person name="Howe K.L."/>
            <person name="Andrews T.D."/>
            <person name="Searle S."/>
            <person name="Hunt S.E."/>
            <person name="Scott C.E."/>
            <person name="Jones M.C."/>
            <person name="Ainscough R."/>
            <person name="Almeida J.P."/>
            <person name="Ambrose K.D."/>
            <person name="Ashwell R.I.S."/>
            <person name="Babbage A.K."/>
            <person name="Babbage S."/>
            <person name="Bagguley C.L."/>
            <person name="Bailey J."/>
            <person name="Banerjee R."/>
            <person name="Barker D.J."/>
            <person name="Barlow K.F."/>
            <person name="Bates K."/>
            <person name="Beasley H."/>
            <person name="Beasley O."/>
            <person name="Bird C.P."/>
            <person name="Bray-Allen S."/>
            <person name="Brown A.J."/>
            <person name="Brown J.Y."/>
            <person name="Burford D."/>
            <person name="Burrill W."/>
            <person name="Burton J."/>
            <person name="Carder C."/>
            <person name="Carter N.P."/>
            <person name="Chapman J.C."/>
            <person name="Chen Y."/>
            <person name="Clarke G."/>
            <person name="Clark S.Y."/>
            <person name="Clee C.M."/>
            <person name="Clegg S."/>
            <person name="Collier R.E."/>
            <person name="Corby N."/>
            <person name="Crosier M."/>
            <person name="Cummings A.T."/>
            <person name="Davies J."/>
            <person name="Dhami P."/>
            <person name="Dunn M."/>
            <person name="Dutta I."/>
            <person name="Dyer L.W."/>
            <person name="Earthrowl M.E."/>
            <person name="Faulkner L."/>
            <person name="Fleming C.J."/>
            <person name="Frankish A."/>
            <person name="Frankland J.A."/>
            <person name="French L."/>
            <person name="Fricker D.G."/>
            <person name="Garner P."/>
            <person name="Garnett J."/>
            <person name="Ghori J."/>
            <person name="Gilbert J.G.R."/>
            <person name="Glison C."/>
            <person name="Grafham D.V."/>
            <person name="Gribble S."/>
            <person name="Griffiths C."/>
            <person name="Griffiths-Jones S."/>
            <person name="Grocock R."/>
            <person name="Guy J."/>
            <person name="Hall R.E."/>
            <person name="Hammond S."/>
            <person name="Harley J.L."/>
            <person name="Harrison E.S.I."/>
            <person name="Hart E.A."/>
            <person name="Heath P.D."/>
            <person name="Henderson C.D."/>
            <person name="Hopkins B.L."/>
            <person name="Howard P.J."/>
            <person name="Howden P.J."/>
            <person name="Huckle E."/>
            <person name="Johnson C."/>
            <person name="Johnson D."/>
            <person name="Joy A.A."/>
            <person name="Kay M."/>
            <person name="Keenan S."/>
            <person name="Kershaw J.K."/>
            <person name="Kimberley A.M."/>
            <person name="King A."/>
            <person name="Knights A."/>
            <person name="Laird G.K."/>
            <person name="Langford C."/>
            <person name="Lawlor S."/>
            <person name="Leongamornlert D.A."/>
            <person name="Leversha M."/>
            <person name="Lloyd C."/>
            <person name="Lloyd D.M."/>
            <person name="Lovell J."/>
            <person name="Martin S."/>
            <person name="Mashreghi-Mohammadi M."/>
            <person name="Matthews L."/>
            <person name="McLaren S."/>
            <person name="McLay K.E."/>
            <person name="McMurray A."/>
            <person name="Milne S."/>
            <person name="Nickerson T."/>
            <person name="Nisbett J."/>
            <person name="Nordsiek G."/>
            <person name="Pearce A.V."/>
            <person name="Peck A.I."/>
            <person name="Porter K.M."/>
            <person name="Pandian R."/>
            <person name="Pelan S."/>
            <person name="Phillimore B."/>
            <person name="Povey S."/>
            <person name="Ramsey Y."/>
            <person name="Rand V."/>
            <person name="Scharfe M."/>
            <person name="Sehra H.K."/>
            <person name="Shownkeen R."/>
            <person name="Sims S.K."/>
            <person name="Skuce C.D."/>
            <person name="Smith M."/>
            <person name="Steward C.A."/>
            <person name="Swarbreck D."/>
            <person name="Sycamore N."/>
            <person name="Tester J."/>
            <person name="Thorpe A."/>
            <person name="Tracey A."/>
            <person name="Tromans A."/>
            <person name="Thomas D.W."/>
            <person name="Wall M."/>
            <person name="Wallis J.M."/>
            <person name="West A.P."/>
            <person name="Whitehead S.L."/>
            <person name="Willey D.L."/>
            <person name="Williams S.A."/>
            <person name="Wilming L."/>
            <person name="Wray P.W."/>
            <person name="Young L."/>
            <person name="Ashurst J.L."/>
            <person name="Coulson A."/>
            <person name="Blocker H."/>
            <person name="Durbin R.M."/>
            <person name="Sulston J.E."/>
            <person name="Hubbard T."/>
            <person name="Jackson M.J."/>
            <person name="Bentley D.R."/>
            <person name="Beck S."/>
            <person name="Rogers J."/>
            <person name="Dunham I."/>
        </authorList>
    </citation>
    <scope>NUCLEOTIDE SEQUENCE [LARGE SCALE GENOMIC DNA]</scope>
</reference>
<reference key="2">
    <citation type="journal article" date="2004" name="Genome Res.">
        <title>The status, quality, and expansion of the NIH full-length cDNA project: the Mammalian Gene Collection (MGC).</title>
        <authorList>
            <consortium name="The MGC Project Team"/>
        </authorList>
    </citation>
    <scope>NUCLEOTIDE SEQUENCE [LARGE SCALE MRNA]</scope>
    <source>
        <tissue>Melanoma</tissue>
    </source>
</reference>
<accession>B1AMM8</accession>
<evidence type="ECO:0000305" key="1"/>
<proteinExistence type="uncertain"/>
<keyword id="KW-1185">Reference proteome</keyword>
<gene>
    <name type="primary">LINC00587</name>
    <name type="synonym">C9orf107</name>
</gene>
<comment type="caution">
    <text evidence="1">Product of a dubious CDS prediction.</text>
</comment>
<protein>
    <recommendedName>
        <fullName>Putative uncharacterized protein encoded by LINC00587</fullName>
    </recommendedName>
</protein>
<feature type="chain" id="PRO_0000392543" description="Putative uncharacterized protein encoded by LINC00587">
    <location>
        <begin position="1"/>
        <end position="73"/>
    </location>
</feature>
<organism>
    <name type="scientific">Homo sapiens</name>
    <name type="common">Human</name>
    <dbReference type="NCBI Taxonomy" id="9606"/>
    <lineage>
        <taxon>Eukaryota</taxon>
        <taxon>Metazoa</taxon>
        <taxon>Chordata</taxon>
        <taxon>Craniata</taxon>
        <taxon>Vertebrata</taxon>
        <taxon>Euteleostomi</taxon>
        <taxon>Mammalia</taxon>
        <taxon>Eutheria</taxon>
        <taxon>Euarchontoglires</taxon>
        <taxon>Primates</taxon>
        <taxon>Haplorrhini</taxon>
        <taxon>Catarrhini</taxon>
        <taxon>Hominidae</taxon>
        <taxon>Homo</taxon>
    </lineage>
</organism>